<sequence>MNGPSSAAPFKRLEGKVAIITGGASGIGAMAVELFHENGAKVVIADVQDKLGEDLADKLGQDVCYIHCDISNEDEVINLVDTAVSKFGKLDIMYNNAGILDRSFGSILDTPKSDLERLINVNTIGGFLGAKHAARVMVPQQKGCILFTASACTEIAGLGSPAYTISKYGILGLVKCLAAELGQYGIRVNCVSPYGLATGMSMKGGVDPALIESSMSQMGNLKGEFLKTDGIANAALYLASDESSYVSGQNLVVDGGFSVVNPTVMRAYGLIK</sequence>
<proteinExistence type="evidence at protein level"/>
<organism>
    <name type="scientific">Citrus sinensis</name>
    <name type="common">Sweet orange</name>
    <name type="synonym">Citrus aurantium var. sinensis</name>
    <dbReference type="NCBI Taxonomy" id="2711"/>
    <lineage>
        <taxon>Eukaryota</taxon>
        <taxon>Viridiplantae</taxon>
        <taxon>Streptophyta</taxon>
        <taxon>Embryophyta</taxon>
        <taxon>Tracheophyta</taxon>
        <taxon>Spermatophyta</taxon>
        <taxon>Magnoliopsida</taxon>
        <taxon>eudicotyledons</taxon>
        <taxon>Gunneridae</taxon>
        <taxon>Pentapetalae</taxon>
        <taxon>rosids</taxon>
        <taxon>malvids</taxon>
        <taxon>Sapindales</taxon>
        <taxon>Rutaceae</taxon>
        <taxon>Aurantioideae</taxon>
        <taxon>Citrus</taxon>
    </lineage>
</organism>
<protein>
    <recommendedName>
        <fullName evidence="5">(21S)-21-acetoxyl-apo-melianone synthase SDR</fullName>
        <ecNumber evidence="4">1.1.1.-</ecNumber>
    </recommendedName>
    <alternativeName>
        <fullName evidence="5">Short chain dehydrogenase-reductase</fullName>
        <shortName evidence="5">CsSDR</shortName>
    </alternativeName>
</protein>
<reference key="1">
    <citation type="journal article" date="2023" name="Science">
        <title>Complex scaffold remodeling in plant triterpene biosynthesis.</title>
        <authorList>
            <person name="De La Pena R."/>
            <person name="Hodgson H."/>
            <person name="Liu J.C."/>
            <person name="Stephenson M.J."/>
            <person name="Martin A.C."/>
            <person name="Owen C."/>
            <person name="Harkess A."/>
            <person name="Leebens-Mack J."/>
            <person name="Jimenez L.E."/>
            <person name="Osbourn A."/>
            <person name="Sattely E.S."/>
        </authorList>
    </citation>
    <scope>NUCLEOTIDE SEQUENCE [MRNA]</scope>
    <scope>FUNCTION</scope>
    <scope>CATALYTIC ACTIVITY</scope>
    <scope>PATHWAY</scope>
    <scope>TISSUE SPECIFICITY</scope>
    <source>
        <strain>cv. Valencia</strain>
    </source>
</reference>
<reference key="2">
    <citation type="submission" date="2014-04" db="EMBL/GenBank/DDBJ databases">
        <authorList>
            <consortium name="International Citrus Genome Consortium"/>
            <person name="Gmitter F."/>
            <person name="Chen C."/>
            <person name="Farmerie W."/>
            <person name="Harkins T."/>
            <person name="Desany B."/>
            <person name="Mohiuddin M."/>
            <person name="Kodira C."/>
            <person name="Borodovsky M."/>
            <person name="Lomsadze A."/>
            <person name="Burns P."/>
            <person name="Jenkins J."/>
            <person name="Prochnik S."/>
            <person name="Shu S."/>
            <person name="Chapman J."/>
            <person name="Pitluck S."/>
            <person name="Schmutz J."/>
            <person name="Rokhsar D."/>
        </authorList>
    </citation>
    <scope>NUCLEOTIDE SEQUENCE [LARGE SCALE GENOMIC DNA]</scope>
    <source>
        <strain>cv. Ridge Pineapple sweet orange</strain>
    </source>
</reference>
<dbReference type="EC" id="1.1.1.-" evidence="4"/>
<dbReference type="EMBL" id="OQ091238">
    <property type="protein sequence ID" value="WCJ12483.1"/>
    <property type="molecule type" value="mRNA"/>
</dbReference>
<dbReference type="EMBL" id="KK784890">
    <property type="protein sequence ID" value="KDO70558.1"/>
    <property type="molecule type" value="Genomic_DNA"/>
</dbReference>
<dbReference type="SMR" id="A0A067FT93"/>
<dbReference type="STRING" id="2711.A0A067FT93"/>
<dbReference type="PaxDb" id="2711-XP_006481699-1"/>
<dbReference type="eggNOG" id="KOG0725">
    <property type="taxonomic scope" value="Eukaryota"/>
</dbReference>
<dbReference type="UniPathway" id="UPA00213"/>
<dbReference type="Proteomes" id="UP000027120">
    <property type="component" value="Unassembled WGS sequence"/>
</dbReference>
<dbReference type="GO" id="GO:0016491">
    <property type="term" value="F:oxidoreductase activity"/>
    <property type="evidence" value="ECO:0007669"/>
    <property type="project" value="UniProtKB-KW"/>
</dbReference>
<dbReference type="FunFam" id="3.40.50.720:FF:000084">
    <property type="entry name" value="Short-chain dehydrogenase reductase"/>
    <property type="match status" value="1"/>
</dbReference>
<dbReference type="Gene3D" id="3.40.50.720">
    <property type="entry name" value="NAD(P)-binding Rossmann-like Domain"/>
    <property type="match status" value="1"/>
</dbReference>
<dbReference type="InterPro" id="IPR036291">
    <property type="entry name" value="NAD(P)-bd_dom_sf"/>
</dbReference>
<dbReference type="InterPro" id="IPR020904">
    <property type="entry name" value="Sc_DH/Rdtase_CS"/>
</dbReference>
<dbReference type="InterPro" id="IPR002347">
    <property type="entry name" value="SDR_fam"/>
</dbReference>
<dbReference type="PANTHER" id="PTHR43180">
    <property type="entry name" value="3-OXOACYL-(ACYL-CARRIER-PROTEIN) REDUCTASE (AFU_ORTHOLOGUE AFUA_6G11210)"/>
    <property type="match status" value="1"/>
</dbReference>
<dbReference type="PANTHER" id="PTHR43180:SF37">
    <property type="entry name" value="TROPINONE REDUCTASE-LIKE 2"/>
    <property type="match status" value="1"/>
</dbReference>
<dbReference type="Pfam" id="PF13561">
    <property type="entry name" value="adh_short_C2"/>
    <property type="match status" value="1"/>
</dbReference>
<dbReference type="PRINTS" id="PR00081">
    <property type="entry name" value="GDHRDH"/>
</dbReference>
<dbReference type="PRINTS" id="PR00080">
    <property type="entry name" value="SDRFAMILY"/>
</dbReference>
<dbReference type="SUPFAM" id="SSF51735">
    <property type="entry name" value="NAD(P)-binding Rossmann-fold domains"/>
    <property type="match status" value="1"/>
</dbReference>
<dbReference type="PROSITE" id="PS00061">
    <property type="entry name" value="ADH_SHORT"/>
    <property type="match status" value="1"/>
</dbReference>
<keyword id="KW-0560">Oxidoreductase</keyword>
<keyword id="KW-1185">Reference proteome</keyword>
<comment type="function">
    <text evidence="4">Oxidoreductase involved in the biosynthesis of limonoids triterpene natural products such as limonin, a compound with insecticidal activity responsible for the bitter taste in citrus (PubMed:36701471). Catalyzes the oxidation of 21-O-acetyl-isomeliandiol to (21S)-21-acetoxyl-apo-melianone (PubMed:36701471).</text>
</comment>
<comment type="catalytic activity">
    <reaction evidence="4">
        <text>21-O-acetyl-isomeliandiol + A = (21S)-21-acetoxyl-apo-melianone + AH2</text>
        <dbReference type="Rhea" id="RHEA:80307"/>
        <dbReference type="ChEBI" id="CHEBI:13193"/>
        <dbReference type="ChEBI" id="CHEBI:17499"/>
        <dbReference type="ChEBI" id="CHEBI:231455"/>
        <dbReference type="ChEBI" id="CHEBI:231456"/>
    </reaction>
    <physiologicalReaction direction="left-to-right" evidence="4">
        <dbReference type="Rhea" id="RHEA:80308"/>
    </physiologicalReaction>
</comment>
<comment type="pathway">
    <text evidence="4">Secondary metabolite biosynthesis; terpenoid biosynthesis.</text>
</comment>
<comment type="tissue specificity">
    <text evidence="4">Expressed in maturing fruits and in juice vesicles.</text>
</comment>
<comment type="similarity">
    <text evidence="6">Belongs to the short-chain dehydrogenases/reductases (SDR) family.</text>
</comment>
<name>SDR_CITSI</name>
<gene>
    <name evidence="5" type="primary">SDR</name>
    <name evidence="7" type="ORF">CISIN_1g024145mg</name>
</gene>
<evidence type="ECO:0000250" key="1">
    <source>
        <dbReference type="UniProtKB" id="O93868"/>
    </source>
</evidence>
<evidence type="ECO:0000250" key="2">
    <source>
        <dbReference type="UniProtKB" id="P19337"/>
    </source>
</evidence>
<evidence type="ECO:0000255" key="3">
    <source>
        <dbReference type="PROSITE-ProRule" id="PRU10001"/>
    </source>
</evidence>
<evidence type="ECO:0000269" key="4">
    <source>
    </source>
</evidence>
<evidence type="ECO:0000303" key="5">
    <source>
    </source>
</evidence>
<evidence type="ECO:0000305" key="6"/>
<evidence type="ECO:0000312" key="7">
    <source>
        <dbReference type="EMBL" id="KDO70558.1"/>
    </source>
</evidence>
<feature type="chain" id="PRO_0000461457" description="(21S)-21-acetoxyl-apo-melianone synthase SDR">
    <location>
        <begin position="1"/>
        <end position="272"/>
    </location>
</feature>
<feature type="active site" description="Proton donor" evidence="1">
    <location>
        <position position="150"/>
    </location>
</feature>
<feature type="active site" description="Proton acceptor" evidence="3">
    <location>
        <position position="163"/>
    </location>
</feature>
<feature type="active site" description="Proton donor/acceptor" evidence="2">
    <location>
        <position position="167"/>
    </location>
</feature>
<feature type="sequence conflict" description="In Ref. 1; WCJ12483." evidence="6" ref="1">
    <original>M</original>
    <variation>T</variation>
    <location>
        <position position="30"/>
    </location>
</feature>
<feature type="sequence conflict" description="In Ref. 1; WCJ12483." evidence="6" ref="1">
    <original>V</original>
    <variation>L</variation>
    <location>
        <position position="42"/>
    </location>
</feature>
<feature type="sequence conflict" description="In Ref. 1; WCJ12483." evidence="6" ref="1">
    <original>D</original>
    <variation>E</variation>
    <location>
        <position position="54"/>
    </location>
</feature>
<accession>A0A067FT93</accession>